<evidence type="ECO:0000250" key="1"/>
<evidence type="ECO:0000250" key="2">
    <source>
        <dbReference type="UniProtKB" id="Q792Q4"/>
    </source>
</evidence>
<evidence type="ECO:0000269" key="3">
    <source>
    </source>
</evidence>
<evidence type="ECO:0000269" key="4">
    <source>
    </source>
</evidence>
<evidence type="ECO:0000269" key="5">
    <source>
    </source>
</evidence>
<evidence type="ECO:0000269" key="6">
    <source>
    </source>
</evidence>
<evidence type="ECO:0000305" key="7"/>
<evidence type="ECO:0000305" key="8">
    <source>
    </source>
</evidence>
<evidence type="ECO:0007744" key="9">
    <source>
        <dbReference type="PDB" id="7DVQ"/>
    </source>
</evidence>
<evidence type="ECO:0007829" key="10">
    <source>
        <dbReference type="PDB" id="7DVQ"/>
    </source>
</evidence>
<dbReference type="EMBL" id="AF161488">
    <property type="protein sequence ID" value="AAF29103.1"/>
    <property type="molecule type" value="mRNA"/>
</dbReference>
<dbReference type="EMBL" id="AK291298">
    <property type="protein sequence ID" value="BAF83987.1"/>
    <property type="molecule type" value="mRNA"/>
</dbReference>
<dbReference type="EMBL" id="AC018682">
    <property type="protein sequence ID" value="AAY14836.1"/>
    <property type="molecule type" value="Genomic_DNA"/>
</dbReference>
<dbReference type="EMBL" id="CH471053">
    <property type="protein sequence ID" value="EAX00239.1"/>
    <property type="molecule type" value="Genomic_DNA"/>
</dbReference>
<dbReference type="EMBL" id="BC006980">
    <property type="protein sequence ID" value="AAH06980.1"/>
    <property type="molecule type" value="mRNA"/>
</dbReference>
<dbReference type="EMBL" id="BC018653">
    <property type="protein sequence ID" value="AAH18653.1"/>
    <property type="molecule type" value="mRNA"/>
</dbReference>
<dbReference type="CCDS" id="CCDS1829.1"/>
<dbReference type="RefSeq" id="NP_054890.1">
    <property type="nucleotide sequence ID" value="NM_014171.6"/>
</dbReference>
<dbReference type="PDB" id="7DVQ">
    <property type="method" value="EM"/>
    <property type="resolution" value="2.89 A"/>
    <property type="chains" value="0=1-101"/>
</dbReference>
<dbReference type="PDBsum" id="7DVQ"/>
<dbReference type="EMDB" id="EMD-30875"/>
<dbReference type="SMR" id="Q9P021"/>
<dbReference type="BioGRID" id="114812">
    <property type="interactions" value="27"/>
</dbReference>
<dbReference type="DIP" id="DIP-41219N"/>
<dbReference type="FunCoup" id="Q9P021">
    <property type="interactions" value="340"/>
</dbReference>
<dbReference type="IntAct" id="Q9P021">
    <property type="interactions" value="21"/>
</dbReference>
<dbReference type="MINT" id="Q9P021"/>
<dbReference type="STRING" id="9606.ENSP00000238892"/>
<dbReference type="iPTMnet" id="Q9P021"/>
<dbReference type="PhosphoSitePlus" id="Q9P021"/>
<dbReference type="SwissPalm" id="Q9P021"/>
<dbReference type="BioMuta" id="CRIPT"/>
<dbReference type="DMDM" id="74734765"/>
<dbReference type="jPOST" id="Q9P021"/>
<dbReference type="MassIVE" id="Q9P021"/>
<dbReference type="PaxDb" id="9606-ENSP00000238892"/>
<dbReference type="PeptideAtlas" id="Q9P021"/>
<dbReference type="ProteomicsDB" id="83536"/>
<dbReference type="Pumba" id="Q9P021"/>
<dbReference type="TopDownProteomics" id="Q9P021"/>
<dbReference type="Antibodypedia" id="29983">
    <property type="antibodies" value="96 antibodies from 21 providers"/>
</dbReference>
<dbReference type="DNASU" id="9419"/>
<dbReference type="Ensembl" id="ENST00000238892.4">
    <property type="protein sequence ID" value="ENSP00000238892.3"/>
    <property type="gene ID" value="ENSG00000119878.7"/>
</dbReference>
<dbReference type="Ensembl" id="ENST00000718245.1">
    <property type="protein sequence ID" value="ENSP00000520690.1"/>
    <property type="gene ID" value="ENSG00000119878.7"/>
</dbReference>
<dbReference type="Ensembl" id="ENST00000718246.1">
    <property type="protein sequence ID" value="ENSP00000520691.1"/>
    <property type="gene ID" value="ENSG00000119878.7"/>
</dbReference>
<dbReference type="GeneID" id="9419"/>
<dbReference type="KEGG" id="hsa:9419"/>
<dbReference type="MANE-Select" id="ENST00000238892.4">
    <property type="protein sequence ID" value="ENSP00000238892.3"/>
    <property type="RefSeq nucleotide sequence ID" value="NM_014171.6"/>
    <property type="RefSeq protein sequence ID" value="NP_054890.1"/>
</dbReference>
<dbReference type="UCSC" id="uc002rve.5">
    <property type="organism name" value="human"/>
</dbReference>
<dbReference type="AGR" id="HGNC:14312"/>
<dbReference type="CTD" id="9419"/>
<dbReference type="DisGeNET" id="9419"/>
<dbReference type="GeneCards" id="CRIPT"/>
<dbReference type="HGNC" id="HGNC:14312">
    <property type="gene designation" value="CRIPT"/>
</dbReference>
<dbReference type="HPA" id="ENSG00000119878">
    <property type="expression patterns" value="Low tissue specificity"/>
</dbReference>
<dbReference type="MalaCards" id="CRIPT"/>
<dbReference type="MIM" id="604594">
    <property type="type" value="gene"/>
</dbReference>
<dbReference type="MIM" id="615789">
    <property type="type" value="phenotype"/>
</dbReference>
<dbReference type="neXtProt" id="NX_Q9P021"/>
<dbReference type="OpenTargets" id="ENSG00000119878"/>
<dbReference type="PharmGKB" id="PA145149101"/>
<dbReference type="VEuPathDB" id="HostDB:ENSG00000119878"/>
<dbReference type="eggNOG" id="KOG3476">
    <property type="taxonomic scope" value="Eukaryota"/>
</dbReference>
<dbReference type="GeneTree" id="ENSGT00950000183100"/>
<dbReference type="HOGENOM" id="CLU_133934_0_0_1"/>
<dbReference type="InParanoid" id="Q9P021"/>
<dbReference type="OMA" id="MPCDKCE"/>
<dbReference type="OrthoDB" id="147332at2759"/>
<dbReference type="PAN-GO" id="Q9P021">
    <property type="GO annotations" value="4 GO annotations based on evolutionary models"/>
</dbReference>
<dbReference type="PhylomeDB" id="Q9P021"/>
<dbReference type="TreeFam" id="TF300144"/>
<dbReference type="PathwayCommons" id="Q9P021"/>
<dbReference type="SignaLink" id="Q9P021"/>
<dbReference type="BioGRID-ORCS" id="9419">
    <property type="hits" value="93 hits in 1138 CRISPR screens"/>
</dbReference>
<dbReference type="ChiTaRS" id="CRIPT">
    <property type="organism name" value="human"/>
</dbReference>
<dbReference type="GeneWiki" id="CRIPT"/>
<dbReference type="GenomeRNAi" id="9419"/>
<dbReference type="Pharos" id="Q9P021">
    <property type="development level" value="Tbio"/>
</dbReference>
<dbReference type="PRO" id="PR:Q9P021"/>
<dbReference type="Proteomes" id="UP000005640">
    <property type="component" value="Chromosome 2"/>
</dbReference>
<dbReference type="RNAct" id="Q9P021">
    <property type="molecule type" value="protein"/>
</dbReference>
<dbReference type="Bgee" id="ENSG00000119878">
    <property type="expression patterns" value="Expressed in endothelial cell and 205 other cell types or tissues"/>
</dbReference>
<dbReference type="GO" id="GO:0005737">
    <property type="term" value="C:cytoplasm"/>
    <property type="evidence" value="ECO:0007669"/>
    <property type="project" value="UniProtKB-SubCell"/>
</dbReference>
<dbReference type="GO" id="GO:0030425">
    <property type="term" value="C:dendrite"/>
    <property type="evidence" value="ECO:0000250"/>
    <property type="project" value="UniProtKB"/>
</dbReference>
<dbReference type="GO" id="GO:0043198">
    <property type="term" value="C:dendritic shaft"/>
    <property type="evidence" value="ECO:0000250"/>
    <property type="project" value="UniProtKB"/>
</dbReference>
<dbReference type="GO" id="GO:0043197">
    <property type="term" value="C:dendritic spine"/>
    <property type="evidence" value="ECO:0000250"/>
    <property type="project" value="UniProtKB"/>
</dbReference>
<dbReference type="GO" id="GO:0098978">
    <property type="term" value="C:glutamatergic synapse"/>
    <property type="evidence" value="ECO:0007669"/>
    <property type="project" value="Ensembl"/>
</dbReference>
<dbReference type="GO" id="GO:0043025">
    <property type="term" value="C:neuronal cell body"/>
    <property type="evidence" value="ECO:0000250"/>
    <property type="project" value="UniProtKB"/>
</dbReference>
<dbReference type="GO" id="GO:0014069">
    <property type="term" value="C:postsynaptic density"/>
    <property type="evidence" value="ECO:0000250"/>
    <property type="project" value="UniProtKB"/>
</dbReference>
<dbReference type="GO" id="GO:0099092">
    <property type="term" value="C:postsynaptic density, intracellular component"/>
    <property type="evidence" value="ECO:0007669"/>
    <property type="project" value="Ensembl"/>
</dbReference>
<dbReference type="GO" id="GO:0005681">
    <property type="term" value="C:spliceosomal complex"/>
    <property type="evidence" value="ECO:0007669"/>
    <property type="project" value="UniProtKB-KW"/>
</dbReference>
<dbReference type="GO" id="GO:0008017">
    <property type="term" value="F:microtubule binding"/>
    <property type="evidence" value="ECO:0000250"/>
    <property type="project" value="CAFA"/>
</dbReference>
<dbReference type="GO" id="GO:0030165">
    <property type="term" value="F:PDZ domain binding"/>
    <property type="evidence" value="ECO:0000314"/>
    <property type="project" value="UniProtKB"/>
</dbReference>
<dbReference type="GO" id="GO:0044877">
    <property type="term" value="F:protein-containing complex binding"/>
    <property type="evidence" value="ECO:0000250"/>
    <property type="project" value="UniProtKB"/>
</dbReference>
<dbReference type="GO" id="GO:0097110">
    <property type="term" value="F:scaffold protein binding"/>
    <property type="evidence" value="ECO:0000314"/>
    <property type="project" value="BHF-UCL"/>
</dbReference>
<dbReference type="GO" id="GO:0031122">
    <property type="term" value="P:cytoplasmic microtubule organization"/>
    <property type="evidence" value="ECO:0000250"/>
    <property type="project" value="UniProtKB"/>
</dbReference>
<dbReference type="GO" id="GO:0006397">
    <property type="term" value="P:mRNA processing"/>
    <property type="evidence" value="ECO:0007669"/>
    <property type="project" value="UniProtKB-KW"/>
</dbReference>
<dbReference type="GO" id="GO:0035372">
    <property type="term" value="P:protein localization to microtubule"/>
    <property type="evidence" value="ECO:0000250"/>
    <property type="project" value="UniProtKB"/>
</dbReference>
<dbReference type="GO" id="GO:0099151">
    <property type="term" value="P:regulation of postsynaptic density assembly"/>
    <property type="evidence" value="ECO:0007669"/>
    <property type="project" value="Ensembl"/>
</dbReference>
<dbReference type="GO" id="GO:1902897">
    <property type="term" value="P:regulation of postsynaptic density protein 95 clustering"/>
    <property type="evidence" value="ECO:0000250"/>
    <property type="project" value="CAFA"/>
</dbReference>
<dbReference type="GO" id="GO:0008380">
    <property type="term" value="P:RNA splicing"/>
    <property type="evidence" value="ECO:0007669"/>
    <property type="project" value="UniProtKB-KW"/>
</dbReference>
<dbReference type="InterPro" id="IPR019367">
    <property type="entry name" value="PDZ-binding_CRIPT"/>
</dbReference>
<dbReference type="PANTHER" id="PTHR11805">
    <property type="entry name" value="CYSTEINE-RICH PDZ-BINDING PROTEIN"/>
    <property type="match status" value="1"/>
</dbReference>
<dbReference type="PANTHER" id="PTHR11805:SF1">
    <property type="entry name" value="CYSTEINE-RICH PDZ-BINDING PROTEIN"/>
    <property type="match status" value="1"/>
</dbReference>
<dbReference type="Pfam" id="PF10235">
    <property type="entry name" value="Cript"/>
    <property type="match status" value="1"/>
</dbReference>
<proteinExistence type="evidence at protein level"/>
<name>CRIPT_HUMAN</name>
<feature type="chain" id="PRO_0000314563" description="Cysteine-rich PDZ-binding protein">
    <location>
        <begin position="1"/>
        <end position="101"/>
    </location>
</feature>
<feature type="region of interest" description="Sufficient for interaction with DLG4" evidence="3">
    <location>
        <begin position="95"/>
        <end position="101"/>
    </location>
</feature>
<feature type="region of interest" description="PDZ3-binding">
    <location>
        <begin position="98"/>
        <end position="101"/>
    </location>
</feature>
<feature type="sequence variant" id="VAR_078425" description="In RTS3; dbSNP:rs757078301." evidence="5">
    <original>C</original>
    <variation>Y</variation>
    <location>
        <position position="3"/>
    </location>
</feature>
<feature type="helix" evidence="10">
    <location>
        <begin position="6"/>
        <end position="9"/>
    </location>
</feature>
<feature type="strand" evidence="10">
    <location>
        <begin position="24"/>
        <end position="26"/>
    </location>
</feature>
<feature type="turn" evidence="10">
    <location>
        <begin position="27"/>
        <end position="29"/>
    </location>
</feature>
<feature type="strand" evidence="10">
    <location>
        <begin position="30"/>
        <end position="32"/>
    </location>
</feature>
<feature type="turn" evidence="10">
    <location>
        <begin position="38"/>
        <end position="40"/>
    </location>
</feature>
<feature type="strand" evidence="10">
    <location>
        <begin position="41"/>
        <end position="43"/>
    </location>
</feature>
<feature type="strand" evidence="10">
    <location>
        <begin position="49"/>
        <end position="53"/>
    </location>
</feature>
<feature type="turn" evidence="10">
    <location>
        <begin position="59"/>
        <end position="61"/>
    </location>
</feature>
<feature type="helix" evidence="10">
    <location>
        <begin position="74"/>
        <end position="80"/>
    </location>
</feature>
<feature type="turn" evidence="10">
    <location>
        <begin position="84"/>
        <end position="86"/>
    </location>
</feature>
<feature type="strand" evidence="10">
    <location>
        <begin position="94"/>
        <end position="96"/>
    </location>
</feature>
<accession>Q9P021</accession>
<comment type="function">
    <text evidence="2 8">As a component of the minor spliceosome, involved in the splicing of U12-type introns in pre-mRNAs (Probable). Involved in the cytoskeletal anchoring of DLG4 in excitatory synapses (By similarity).</text>
</comment>
<comment type="subunit">
    <text evidence="1 3 6">Component of the minor spliceosome. Within this complex, interacts with RNF113A, as well as with SF3B1/SF3b155, SF3B2/SF3b145 and PHF5A/SF3b14b (PubMed:33509932). Interacts with TUBB1. Interacts strongly with the PDZ3 domain of members of the DLG4 family. Associates with microtubules (By similarity). Interacts with DLG4.</text>
</comment>
<comment type="interaction">
    <interactant intactId="EBI-946968">
        <id>Q9P021</id>
    </interactant>
    <interactant intactId="EBI-80389">
        <id>P78352</id>
        <label>DLG4</label>
    </interactant>
    <organismsDiffer>false</organismsDiffer>
    <experiments>5</experiments>
</comment>
<comment type="interaction">
    <interactant intactId="EBI-946968">
        <id>Q9P021</id>
    </interactant>
    <interactant intactId="EBI-720609">
        <id>O76024</id>
        <label>WFS1</label>
    </interactant>
    <organismsDiffer>false</organismsDiffer>
    <experiments>3</experiments>
</comment>
<comment type="interaction">
    <interactant intactId="EBI-946968">
        <id>Q9P021</id>
    </interactant>
    <interactant intactId="EBI-349596">
        <id>Q62936</id>
        <label>Dlg3</label>
    </interactant>
    <organismsDiffer>true</organismsDiffer>
    <experiments>5</experiments>
</comment>
<comment type="interaction">
    <interactant intactId="EBI-946968">
        <id>Q9P021</id>
    </interactant>
    <interactant intactId="EBI-375655">
        <id>P31016</id>
        <label>Dlg4</label>
    </interactant>
    <organismsDiffer>true</organismsDiffer>
    <experiments>2</experiments>
</comment>
<comment type="subcellular location">
    <subcellularLocation>
        <location evidence="1">Cytoplasm</location>
    </subcellularLocation>
    <subcellularLocation>
        <location evidence="1">Synapse</location>
    </subcellularLocation>
    <subcellularLocation>
        <location evidence="1">Cell projection</location>
        <location evidence="1">Dendritic spine</location>
    </subcellularLocation>
    <text evidence="1">Colocalizes with DLG4 in asymmetric synapses.</text>
</comment>
<comment type="disease" evidence="4 5">
    <disease id="DI-04112">
        <name>Rothmund-Thomson syndrome 3</name>
        <acronym>RTS3</acronym>
        <description>A form of Rothmund-Thomson syndrome, a disorder characterized by sparse hair, eyebrows and eyelashes, juvenile cataracts, and poikiloderma, a genodermatosis presenting with mottled pigmentation, telangiectasia and epidermal atrophy. Additional features are short stature, dysplastic nails, and skeletal and dental abnormalities. RTS3 is an autosomal recessive form. RTS3 patients also exhibit microcephaly, with moderate to severe neurodevelopmental delay and seizures.</description>
        <dbReference type="MIM" id="615789"/>
    </disease>
    <text>The disease is caused by variants affecting the gene represented in this entry.</text>
</comment>
<comment type="similarity">
    <text evidence="7">Belongs to the CRIPT family.</text>
</comment>
<organism>
    <name type="scientific">Homo sapiens</name>
    <name type="common">Human</name>
    <dbReference type="NCBI Taxonomy" id="9606"/>
    <lineage>
        <taxon>Eukaryota</taxon>
        <taxon>Metazoa</taxon>
        <taxon>Chordata</taxon>
        <taxon>Craniata</taxon>
        <taxon>Vertebrata</taxon>
        <taxon>Euteleostomi</taxon>
        <taxon>Mammalia</taxon>
        <taxon>Eutheria</taxon>
        <taxon>Euarchontoglires</taxon>
        <taxon>Primates</taxon>
        <taxon>Haplorrhini</taxon>
        <taxon>Catarrhini</taxon>
        <taxon>Hominidae</taxon>
        <taxon>Homo</taxon>
    </lineage>
</organism>
<sequence>MVCEKCEKKLGTVITPDTWKDGARNTTESGGRKLNENKALTSKKARFDPYGKNKFSTCRICKSSVHQPGSHYCQGCAYKKGICAMCGKKVLDTKNYKQTSV</sequence>
<protein>
    <recommendedName>
        <fullName>Cysteine-rich PDZ-binding protein</fullName>
    </recommendedName>
    <alternativeName>
        <fullName>Cysteine-rich interactor of PDZ three</fullName>
        <shortName>Cysteine-rich interactor of PDZ3</shortName>
    </alternativeName>
</protein>
<gene>
    <name type="primary">CRIPT</name>
    <name type="ORF">HSPC139</name>
</gene>
<keyword id="KW-0002">3D-structure</keyword>
<keyword id="KW-0966">Cell projection</keyword>
<keyword id="KW-0963">Cytoplasm</keyword>
<keyword id="KW-0225">Disease variant</keyword>
<keyword id="KW-0242">Dwarfism</keyword>
<keyword id="KW-0038">Ectodermal dysplasia</keyword>
<keyword id="KW-1063">Hypotrichosis</keyword>
<keyword id="KW-0507">mRNA processing</keyword>
<keyword id="KW-0508">mRNA splicing</keyword>
<keyword id="KW-1267">Proteomics identification</keyword>
<keyword id="KW-1185">Reference proteome</keyword>
<keyword id="KW-0747">Spliceosome</keyword>
<keyword id="KW-0770">Synapse</keyword>
<reference key="1">
    <citation type="journal article" date="2000" name="Genome Res.">
        <title>Cloning and functional analysis of cDNAs with open reading frames for 300 previously undefined genes expressed in CD34+ hematopoietic stem/progenitor cells.</title>
        <authorList>
            <person name="Zhang Q.-H."/>
            <person name="Ye M."/>
            <person name="Wu X.-Y."/>
            <person name="Ren S.-X."/>
            <person name="Zhao M."/>
            <person name="Zhao C.-J."/>
            <person name="Fu G."/>
            <person name="Shen Y."/>
            <person name="Fan H.-Y."/>
            <person name="Lu G."/>
            <person name="Zhong M."/>
            <person name="Xu X.-R."/>
            <person name="Han Z.-G."/>
            <person name="Zhang J.-W."/>
            <person name="Tao J."/>
            <person name="Huang Q.-H."/>
            <person name="Zhou J."/>
            <person name="Hu G.-X."/>
            <person name="Gu J."/>
            <person name="Chen S.-J."/>
            <person name="Chen Z."/>
        </authorList>
    </citation>
    <scope>NUCLEOTIDE SEQUENCE [LARGE SCALE MRNA]</scope>
    <source>
        <tissue>Blood</tissue>
    </source>
</reference>
<reference key="2">
    <citation type="journal article" date="2004" name="Nat. Genet.">
        <title>Complete sequencing and characterization of 21,243 full-length human cDNAs.</title>
        <authorList>
            <person name="Ota T."/>
            <person name="Suzuki Y."/>
            <person name="Nishikawa T."/>
            <person name="Otsuki T."/>
            <person name="Sugiyama T."/>
            <person name="Irie R."/>
            <person name="Wakamatsu A."/>
            <person name="Hayashi K."/>
            <person name="Sato H."/>
            <person name="Nagai K."/>
            <person name="Kimura K."/>
            <person name="Makita H."/>
            <person name="Sekine M."/>
            <person name="Obayashi M."/>
            <person name="Nishi T."/>
            <person name="Shibahara T."/>
            <person name="Tanaka T."/>
            <person name="Ishii S."/>
            <person name="Yamamoto J."/>
            <person name="Saito K."/>
            <person name="Kawai Y."/>
            <person name="Isono Y."/>
            <person name="Nakamura Y."/>
            <person name="Nagahari K."/>
            <person name="Murakami K."/>
            <person name="Yasuda T."/>
            <person name="Iwayanagi T."/>
            <person name="Wagatsuma M."/>
            <person name="Shiratori A."/>
            <person name="Sudo H."/>
            <person name="Hosoiri T."/>
            <person name="Kaku Y."/>
            <person name="Kodaira H."/>
            <person name="Kondo H."/>
            <person name="Sugawara M."/>
            <person name="Takahashi M."/>
            <person name="Kanda K."/>
            <person name="Yokoi T."/>
            <person name="Furuya T."/>
            <person name="Kikkawa E."/>
            <person name="Omura Y."/>
            <person name="Abe K."/>
            <person name="Kamihara K."/>
            <person name="Katsuta N."/>
            <person name="Sato K."/>
            <person name="Tanikawa M."/>
            <person name="Yamazaki M."/>
            <person name="Ninomiya K."/>
            <person name="Ishibashi T."/>
            <person name="Yamashita H."/>
            <person name="Murakawa K."/>
            <person name="Fujimori K."/>
            <person name="Tanai H."/>
            <person name="Kimata M."/>
            <person name="Watanabe M."/>
            <person name="Hiraoka S."/>
            <person name="Chiba Y."/>
            <person name="Ishida S."/>
            <person name="Ono Y."/>
            <person name="Takiguchi S."/>
            <person name="Watanabe S."/>
            <person name="Yosida M."/>
            <person name="Hotuta T."/>
            <person name="Kusano J."/>
            <person name="Kanehori K."/>
            <person name="Takahashi-Fujii A."/>
            <person name="Hara H."/>
            <person name="Tanase T.-O."/>
            <person name="Nomura Y."/>
            <person name="Togiya S."/>
            <person name="Komai F."/>
            <person name="Hara R."/>
            <person name="Takeuchi K."/>
            <person name="Arita M."/>
            <person name="Imose N."/>
            <person name="Musashino K."/>
            <person name="Yuuki H."/>
            <person name="Oshima A."/>
            <person name="Sasaki N."/>
            <person name="Aotsuka S."/>
            <person name="Yoshikawa Y."/>
            <person name="Matsunawa H."/>
            <person name="Ichihara T."/>
            <person name="Shiohata N."/>
            <person name="Sano S."/>
            <person name="Moriya S."/>
            <person name="Momiyama H."/>
            <person name="Satoh N."/>
            <person name="Takami S."/>
            <person name="Terashima Y."/>
            <person name="Suzuki O."/>
            <person name="Nakagawa S."/>
            <person name="Senoh A."/>
            <person name="Mizoguchi H."/>
            <person name="Goto Y."/>
            <person name="Shimizu F."/>
            <person name="Wakebe H."/>
            <person name="Hishigaki H."/>
            <person name="Watanabe T."/>
            <person name="Sugiyama A."/>
            <person name="Takemoto M."/>
            <person name="Kawakami B."/>
            <person name="Yamazaki M."/>
            <person name="Watanabe K."/>
            <person name="Kumagai A."/>
            <person name="Itakura S."/>
            <person name="Fukuzumi Y."/>
            <person name="Fujimori Y."/>
            <person name="Komiyama M."/>
            <person name="Tashiro H."/>
            <person name="Tanigami A."/>
            <person name="Fujiwara T."/>
            <person name="Ono T."/>
            <person name="Yamada K."/>
            <person name="Fujii Y."/>
            <person name="Ozaki K."/>
            <person name="Hirao M."/>
            <person name="Ohmori Y."/>
            <person name="Kawabata A."/>
            <person name="Hikiji T."/>
            <person name="Kobatake N."/>
            <person name="Inagaki H."/>
            <person name="Ikema Y."/>
            <person name="Okamoto S."/>
            <person name="Okitani R."/>
            <person name="Kawakami T."/>
            <person name="Noguchi S."/>
            <person name="Itoh T."/>
            <person name="Shigeta K."/>
            <person name="Senba T."/>
            <person name="Matsumura K."/>
            <person name="Nakajima Y."/>
            <person name="Mizuno T."/>
            <person name="Morinaga M."/>
            <person name="Sasaki M."/>
            <person name="Togashi T."/>
            <person name="Oyama M."/>
            <person name="Hata H."/>
            <person name="Watanabe M."/>
            <person name="Komatsu T."/>
            <person name="Mizushima-Sugano J."/>
            <person name="Satoh T."/>
            <person name="Shirai Y."/>
            <person name="Takahashi Y."/>
            <person name="Nakagawa K."/>
            <person name="Okumura K."/>
            <person name="Nagase T."/>
            <person name="Nomura N."/>
            <person name="Kikuchi H."/>
            <person name="Masuho Y."/>
            <person name="Yamashita R."/>
            <person name="Nakai K."/>
            <person name="Yada T."/>
            <person name="Nakamura Y."/>
            <person name="Ohara O."/>
            <person name="Isogai T."/>
            <person name="Sugano S."/>
        </authorList>
    </citation>
    <scope>NUCLEOTIDE SEQUENCE [LARGE SCALE MRNA]</scope>
    <source>
        <tissue>Tongue</tissue>
    </source>
</reference>
<reference key="3">
    <citation type="journal article" date="2005" name="Nature">
        <title>Generation and annotation of the DNA sequences of human chromosomes 2 and 4.</title>
        <authorList>
            <person name="Hillier L.W."/>
            <person name="Graves T.A."/>
            <person name="Fulton R.S."/>
            <person name="Fulton L.A."/>
            <person name="Pepin K.H."/>
            <person name="Minx P."/>
            <person name="Wagner-McPherson C."/>
            <person name="Layman D."/>
            <person name="Wylie K."/>
            <person name="Sekhon M."/>
            <person name="Becker M.C."/>
            <person name="Fewell G.A."/>
            <person name="Delehaunty K.D."/>
            <person name="Miner T.L."/>
            <person name="Nash W.E."/>
            <person name="Kremitzki C."/>
            <person name="Oddy L."/>
            <person name="Du H."/>
            <person name="Sun H."/>
            <person name="Bradshaw-Cordum H."/>
            <person name="Ali J."/>
            <person name="Carter J."/>
            <person name="Cordes M."/>
            <person name="Harris A."/>
            <person name="Isak A."/>
            <person name="van Brunt A."/>
            <person name="Nguyen C."/>
            <person name="Du F."/>
            <person name="Courtney L."/>
            <person name="Kalicki J."/>
            <person name="Ozersky P."/>
            <person name="Abbott S."/>
            <person name="Armstrong J."/>
            <person name="Belter E.A."/>
            <person name="Caruso L."/>
            <person name="Cedroni M."/>
            <person name="Cotton M."/>
            <person name="Davidson T."/>
            <person name="Desai A."/>
            <person name="Elliott G."/>
            <person name="Erb T."/>
            <person name="Fronick C."/>
            <person name="Gaige T."/>
            <person name="Haakenson W."/>
            <person name="Haglund K."/>
            <person name="Holmes A."/>
            <person name="Harkins R."/>
            <person name="Kim K."/>
            <person name="Kruchowski S.S."/>
            <person name="Strong C.M."/>
            <person name="Grewal N."/>
            <person name="Goyea E."/>
            <person name="Hou S."/>
            <person name="Levy A."/>
            <person name="Martinka S."/>
            <person name="Mead K."/>
            <person name="McLellan M.D."/>
            <person name="Meyer R."/>
            <person name="Randall-Maher J."/>
            <person name="Tomlinson C."/>
            <person name="Dauphin-Kohlberg S."/>
            <person name="Kozlowicz-Reilly A."/>
            <person name="Shah N."/>
            <person name="Swearengen-Shahid S."/>
            <person name="Snider J."/>
            <person name="Strong J.T."/>
            <person name="Thompson J."/>
            <person name="Yoakum M."/>
            <person name="Leonard S."/>
            <person name="Pearman C."/>
            <person name="Trani L."/>
            <person name="Radionenko M."/>
            <person name="Waligorski J.E."/>
            <person name="Wang C."/>
            <person name="Rock S.M."/>
            <person name="Tin-Wollam A.-M."/>
            <person name="Maupin R."/>
            <person name="Latreille P."/>
            <person name="Wendl M.C."/>
            <person name="Yang S.-P."/>
            <person name="Pohl C."/>
            <person name="Wallis J.W."/>
            <person name="Spieth J."/>
            <person name="Bieri T.A."/>
            <person name="Berkowicz N."/>
            <person name="Nelson J.O."/>
            <person name="Osborne J."/>
            <person name="Ding L."/>
            <person name="Meyer R."/>
            <person name="Sabo A."/>
            <person name="Shotland Y."/>
            <person name="Sinha P."/>
            <person name="Wohldmann P.E."/>
            <person name="Cook L.L."/>
            <person name="Hickenbotham M.T."/>
            <person name="Eldred J."/>
            <person name="Williams D."/>
            <person name="Jones T.A."/>
            <person name="She X."/>
            <person name="Ciccarelli F.D."/>
            <person name="Izaurralde E."/>
            <person name="Taylor J."/>
            <person name="Schmutz J."/>
            <person name="Myers R.M."/>
            <person name="Cox D.R."/>
            <person name="Huang X."/>
            <person name="McPherson J.D."/>
            <person name="Mardis E.R."/>
            <person name="Clifton S.W."/>
            <person name="Warren W.C."/>
            <person name="Chinwalla A.T."/>
            <person name="Eddy S.R."/>
            <person name="Marra M.A."/>
            <person name="Ovcharenko I."/>
            <person name="Furey T.S."/>
            <person name="Miller W."/>
            <person name="Eichler E.E."/>
            <person name="Bork P."/>
            <person name="Suyama M."/>
            <person name="Torrents D."/>
            <person name="Waterston R.H."/>
            <person name="Wilson R.K."/>
        </authorList>
    </citation>
    <scope>NUCLEOTIDE SEQUENCE [LARGE SCALE GENOMIC DNA]</scope>
</reference>
<reference key="4">
    <citation type="submission" date="2005-09" db="EMBL/GenBank/DDBJ databases">
        <authorList>
            <person name="Mural R.J."/>
            <person name="Istrail S."/>
            <person name="Sutton G.G."/>
            <person name="Florea L."/>
            <person name="Halpern A.L."/>
            <person name="Mobarry C.M."/>
            <person name="Lippert R."/>
            <person name="Walenz B."/>
            <person name="Shatkay H."/>
            <person name="Dew I."/>
            <person name="Miller J.R."/>
            <person name="Flanigan M.J."/>
            <person name="Edwards N.J."/>
            <person name="Bolanos R."/>
            <person name="Fasulo D."/>
            <person name="Halldorsson B.V."/>
            <person name="Hannenhalli S."/>
            <person name="Turner R."/>
            <person name="Yooseph S."/>
            <person name="Lu F."/>
            <person name="Nusskern D.R."/>
            <person name="Shue B.C."/>
            <person name="Zheng X.H."/>
            <person name="Zhong F."/>
            <person name="Delcher A.L."/>
            <person name="Huson D.H."/>
            <person name="Kravitz S.A."/>
            <person name="Mouchard L."/>
            <person name="Reinert K."/>
            <person name="Remington K.A."/>
            <person name="Clark A.G."/>
            <person name="Waterman M.S."/>
            <person name="Eichler E.E."/>
            <person name="Adams M.D."/>
            <person name="Hunkapiller M.W."/>
            <person name="Myers E.W."/>
            <person name="Venter J.C."/>
        </authorList>
    </citation>
    <scope>NUCLEOTIDE SEQUENCE [LARGE SCALE GENOMIC DNA]</scope>
</reference>
<reference key="5">
    <citation type="journal article" date="2004" name="Genome Res.">
        <title>The status, quality, and expansion of the NIH full-length cDNA project: the Mammalian Gene Collection (MGC).</title>
        <authorList>
            <consortium name="The MGC Project Team"/>
        </authorList>
    </citation>
    <scope>NUCLEOTIDE SEQUENCE [LARGE SCALE MRNA]</scope>
    <source>
        <tissue>Brain</tissue>
        <tissue>Kidney</tissue>
    </source>
</reference>
<reference key="6">
    <citation type="journal article" date="2007" name="Biochemistry">
        <title>A thermodynamic ligand binding study of the third PDZ domain (PDZ3) from the mammalian neuronal protein PSD-95.</title>
        <authorList>
            <person name="Saro D."/>
            <person name="Li T."/>
            <person name="Rupasinghe C."/>
            <person name="Paredes A."/>
            <person name="Caspers N."/>
            <person name="Spaller M.R."/>
        </authorList>
    </citation>
    <scope>INTERACTION WITH DLG4</scope>
</reference>
<reference evidence="9" key="7">
    <citation type="journal article" date="2021" name="Science">
        <title>Structure of the activated human minor spliceosome.</title>
        <authorList>
            <person name="Bai R."/>
            <person name="Wan R."/>
            <person name="Wang L."/>
            <person name="Xu K."/>
            <person name="Zhang Q."/>
            <person name="Lei J."/>
            <person name="Shi Y."/>
        </authorList>
    </citation>
    <scope>STRUCTURE BY ELECTRON MICROSCOPY (2.89 ANGSTROMS)</scope>
    <scope>FUNCTION</scope>
    <scope>SUBUNIT</scope>
</reference>
<reference key="8">
    <citation type="journal article" date="2014" name="Genome Res.">
        <title>Genomic analysis of primordial dwarfism reveals novel disease genes.</title>
        <authorList>
            <person name="Shaheen R."/>
            <person name="Faqeih E."/>
            <person name="Ansari S."/>
            <person name="Abdel-Salam G."/>
            <person name="Al-Hassnan Z.N."/>
            <person name="Al-Shidi T."/>
            <person name="Alomar R."/>
            <person name="Sogaty S."/>
            <person name="Alkuraya F.S."/>
        </authorList>
    </citation>
    <scope>INVOLVEMENT IN RTS3</scope>
</reference>
<reference key="9">
    <citation type="journal article" date="2016" name="Am. J. Med. Genet. A">
        <title>CRIPT exonic deletion and a novel missense mutation in a female with short stature, dysmorphic features, microcephaly, and pigmentary abnormalities.</title>
        <authorList>
            <person name="Leduc M.S."/>
            <person name="Niu Z."/>
            <person name="Bi W."/>
            <person name="Zhu W."/>
            <person name="Miloslavskaya I."/>
            <person name="Chiang T."/>
            <person name="Streff H."/>
            <person name="Seavitt J.R."/>
            <person name="Murray S.A."/>
            <person name="Eng C."/>
            <person name="Chan A."/>
            <person name="Yang Y."/>
            <person name="Lalani S.R."/>
        </authorList>
    </citation>
    <scope>INVOLVEMENT IN RTS3</scope>
    <scope>VARIANT RTS3 TYR-3</scope>
</reference>